<sequence length="647" mass="72165">MPDPATYRPAPGSIPVEPGVYRFRDPHGRVIYVGKAKSLRSRLTSYFADIAHLQPRTRQMVTTAAKVEWTVVNTEVEALQLEYNWIKEFDPRFNVRYRDDKSYPVLAVTLNEDFPRLMVYRGPRRKGVRYFGPYSHAWAIRETVDLLTRVFPARTCSMGVFKRHKQIDRPCLLGYIDKCSAPCIGRVSKEQHRQIVDDFCDFLSGKTDRYARELEQQMNAAAENLDFERAARLRDDRSALKRAMEKQAVVLGDGTDADVVAFADDELEAAVQVFHVRGGRVRGQRGWVVEKPSAPDVSVEEQLVEQFLAQFYGDQAELGGAADESVNPVPREVLVPCLPSNADQLSSWLSGLRGSRVTLRVPRRGDKRALAETVQRNAKEALQQHKLKRAGDFNARSAALQNIQEALGLADAPLRIECVDISHVQGTDVVASLVVFEDGLPRKSDYRHFAIREAAGQGRSDDVASIAEVTRRRFQRHLSEQNDPNLLSPEGKSRRFAYPPNLYVVDGGAPQVNAASAVLEELGIVDVAVIGLAKRLEEVWVPSEPDPIIMPRNSEGLYLLQRVRDEAHRFAITYHRSKRSKRMTASALDAVPGLGEHRRKALVTHFGSIARLKEATVDQITAVPGIGVATATAVLEALRPDQPGGAQ</sequence>
<gene>
    <name evidence="1" type="primary">uvrC</name>
    <name type="ordered locus">MMAR_2227</name>
</gene>
<proteinExistence type="inferred from homology"/>
<protein>
    <recommendedName>
        <fullName evidence="1">UvrABC system protein C</fullName>
        <shortName evidence="1">Protein UvrC</shortName>
    </recommendedName>
    <alternativeName>
        <fullName evidence="1">Excinuclease ABC subunit C</fullName>
    </alternativeName>
</protein>
<accession>B2HP72</accession>
<name>UVRC_MYCMM</name>
<dbReference type="EMBL" id="CP000854">
    <property type="protein sequence ID" value="ACC40676.1"/>
    <property type="molecule type" value="Genomic_DNA"/>
</dbReference>
<dbReference type="RefSeq" id="WP_012393990.1">
    <property type="nucleotide sequence ID" value="NC_010612.1"/>
</dbReference>
<dbReference type="SMR" id="B2HP72"/>
<dbReference type="STRING" id="216594.MMAR_2227"/>
<dbReference type="KEGG" id="mmi:MMAR_2227"/>
<dbReference type="eggNOG" id="COG0322">
    <property type="taxonomic scope" value="Bacteria"/>
</dbReference>
<dbReference type="HOGENOM" id="CLU_014841_1_1_11"/>
<dbReference type="OrthoDB" id="9804933at2"/>
<dbReference type="Proteomes" id="UP000001190">
    <property type="component" value="Chromosome"/>
</dbReference>
<dbReference type="GO" id="GO:0005737">
    <property type="term" value="C:cytoplasm"/>
    <property type="evidence" value="ECO:0007669"/>
    <property type="project" value="UniProtKB-SubCell"/>
</dbReference>
<dbReference type="GO" id="GO:0009380">
    <property type="term" value="C:excinuclease repair complex"/>
    <property type="evidence" value="ECO:0007669"/>
    <property type="project" value="InterPro"/>
</dbReference>
<dbReference type="GO" id="GO:0003677">
    <property type="term" value="F:DNA binding"/>
    <property type="evidence" value="ECO:0007669"/>
    <property type="project" value="UniProtKB-UniRule"/>
</dbReference>
<dbReference type="GO" id="GO:0009381">
    <property type="term" value="F:excinuclease ABC activity"/>
    <property type="evidence" value="ECO:0007669"/>
    <property type="project" value="UniProtKB-UniRule"/>
</dbReference>
<dbReference type="GO" id="GO:0006289">
    <property type="term" value="P:nucleotide-excision repair"/>
    <property type="evidence" value="ECO:0007669"/>
    <property type="project" value="UniProtKB-UniRule"/>
</dbReference>
<dbReference type="GO" id="GO:0009432">
    <property type="term" value="P:SOS response"/>
    <property type="evidence" value="ECO:0007669"/>
    <property type="project" value="UniProtKB-UniRule"/>
</dbReference>
<dbReference type="CDD" id="cd10434">
    <property type="entry name" value="GIY-YIG_UvrC_Cho"/>
    <property type="match status" value="1"/>
</dbReference>
<dbReference type="FunFam" id="3.30.420.340:FF:000003">
    <property type="entry name" value="UvrABC system protein C"/>
    <property type="match status" value="1"/>
</dbReference>
<dbReference type="FunFam" id="3.40.1440.10:FF:000001">
    <property type="entry name" value="UvrABC system protein C"/>
    <property type="match status" value="1"/>
</dbReference>
<dbReference type="Gene3D" id="1.10.150.20">
    <property type="entry name" value="5' to 3' exonuclease, C-terminal subdomain"/>
    <property type="match status" value="1"/>
</dbReference>
<dbReference type="Gene3D" id="3.40.1440.10">
    <property type="entry name" value="GIY-YIG endonuclease"/>
    <property type="match status" value="1"/>
</dbReference>
<dbReference type="Gene3D" id="4.10.860.10">
    <property type="entry name" value="UVR domain"/>
    <property type="match status" value="1"/>
</dbReference>
<dbReference type="Gene3D" id="3.30.420.340">
    <property type="entry name" value="UvrC, RNAse H endonuclease domain"/>
    <property type="match status" value="1"/>
</dbReference>
<dbReference type="HAMAP" id="MF_00203">
    <property type="entry name" value="UvrC"/>
    <property type="match status" value="1"/>
</dbReference>
<dbReference type="InterPro" id="IPR000305">
    <property type="entry name" value="GIY-YIG_endonuc"/>
</dbReference>
<dbReference type="InterPro" id="IPR035901">
    <property type="entry name" value="GIY-YIG_endonuc_sf"/>
</dbReference>
<dbReference type="InterPro" id="IPR047296">
    <property type="entry name" value="GIY-YIG_UvrC_Cho"/>
</dbReference>
<dbReference type="InterPro" id="IPR003583">
    <property type="entry name" value="Hlx-hairpin-Hlx_DNA-bd_motif"/>
</dbReference>
<dbReference type="InterPro" id="IPR010994">
    <property type="entry name" value="RuvA_2-like"/>
</dbReference>
<dbReference type="InterPro" id="IPR001943">
    <property type="entry name" value="UVR_dom"/>
</dbReference>
<dbReference type="InterPro" id="IPR036876">
    <property type="entry name" value="UVR_dom_sf"/>
</dbReference>
<dbReference type="InterPro" id="IPR050066">
    <property type="entry name" value="UvrABC_protein_C"/>
</dbReference>
<dbReference type="InterPro" id="IPR004791">
    <property type="entry name" value="UvrC"/>
</dbReference>
<dbReference type="InterPro" id="IPR001162">
    <property type="entry name" value="UvrC_RNase_H_dom"/>
</dbReference>
<dbReference type="InterPro" id="IPR038476">
    <property type="entry name" value="UvrC_RNase_H_dom_sf"/>
</dbReference>
<dbReference type="NCBIfam" id="NF001824">
    <property type="entry name" value="PRK00558.1-5"/>
    <property type="match status" value="1"/>
</dbReference>
<dbReference type="NCBIfam" id="TIGR00194">
    <property type="entry name" value="uvrC"/>
    <property type="match status" value="1"/>
</dbReference>
<dbReference type="PANTHER" id="PTHR30562:SF1">
    <property type="entry name" value="UVRABC SYSTEM PROTEIN C"/>
    <property type="match status" value="1"/>
</dbReference>
<dbReference type="PANTHER" id="PTHR30562">
    <property type="entry name" value="UVRC/OXIDOREDUCTASE"/>
    <property type="match status" value="1"/>
</dbReference>
<dbReference type="Pfam" id="PF01541">
    <property type="entry name" value="GIY-YIG"/>
    <property type="match status" value="1"/>
</dbReference>
<dbReference type="Pfam" id="PF14520">
    <property type="entry name" value="HHH_5"/>
    <property type="match status" value="1"/>
</dbReference>
<dbReference type="Pfam" id="PF02151">
    <property type="entry name" value="UVR"/>
    <property type="match status" value="1"/>
</dbReference>
<dbReference type="Pfam" id="PF22920">
    <property type="entry name" value="UvrC_RNaseH"/>
    <property type="match status" value="1"/>
</dbReference>
<dbReference type="Pfam" id="PF08459">
    <property type="entry name" value="UvrC_RNaseH_dom"/>
    <property type="match status" value="1"/>
</dbReference>
<dbReference type="SMART" id="SM00465">
    <property type="entry name" value="GIYc"/>
    <property type="match status" value="1"/>
</dbReference>
<dbReference type="SMART" id="SM00278">
    <property type="entry name" value="HhH1"/>
    <property type="match status" value="2"/>
</dbReference>
<dbReference type="SUPFAM" id="SSF46600">
    <property type="entry name" value="C-terminal UvrC-binding domain of UvrB"/>
    <property type="match status" value="1"/>
</dbReference>
<dbReference type="SUPFAM" id="SSF82771">
    <property type="entry name" value="GIY-YIG endonuclease"/>
    <property type="match status" value="1"/>
</dbReference>
<dbReference type="SUPFAM" id="SSF47781">
    <property type="entry name" value="RuvA domain 2-like"/>
    <property type="match status" value="1"/>
</dbReference>
<dbReference type="PROSITE" id="PS50164">
    <property type="entry name" value="GIY_YIG"/>
    <property type="match status" value="1"/>
</dbReference>
<dbReference type="PROSITE" id="PS50151">
    <property type="entry name" value="UVR"/>
    <property type="match status" value="1"/>
</dbReference>
<dbReference type="PROSITE" id="PS50165">
    <property type="entry name" value="UVRC"/>
    <property type="match status" value="1"/>
</dbReference>
<feature type="chain" id="PRO_1000099502" description="UvrABC system protein C">
    <location>
        <begin position="1"/>
        <end position="647"/>
    </location>
</feature>
<feature type="domain" description="GIY-YIG" evidence="1">
    <location>
        <begin position="16"/>
        <end position="95"/>
    </location>
</feature>
<feature type="domain" description="UVR" evidence="1">
    <location>
        <begin position="208"/>
        <end position="243"/>
    </location>
</feature>
<organism>
    <name type="scientific">Mycobacterium marinum (strain ATCC BAA-535 / M)</name>
    <dbReference type="NCBI Taxonomy" id="216594"/>
    <lineage>
        <taxon>Bacteria</taxon>
        <taxon>Bacillati</taxon>
        <taxon>Actinomycetota</taxon>
        <taxon>Actinomycetes</taxon>
        <taxon>Mycobacteriales</taxon>
        <taxon>Mycobacteriaceae</taxon>
        <taxon>Mycobacterium</taxon>
        <taxon>Mycobacterium ulcerans group</taxon>
    </lineage>
</organism>
<keyword id="KW-0963">Cytoplasm</keyword>
<keyword id="KW-0227">DNA damage</keyword>
<keyword id="KW-0228">DNA excision</keyword>
<keyword id="KW-0234">DNA repair</keyword>
<keyword id="KW-0267">Excision nuclease</keyword>
<keyword id="KW-1185">Reference proteome</keyword>
<keyword id="KW-0742">SOS response</keyword>
<comment type="function">
    <text evidence="1">The UvrABC repair system catalyzes the recognition and processing of DNA lesions. UvrC both incises the 5' and 3' sides of the lesion. The N-terminal half is responsible for the 3' incision and the C-terminal half is responsible for the 5' incision.</text>
</comment>
<comment type="subunit">
    <text evidence="1">Interacts with UvrB in an incision complex.</text>
</comment>
<comment type="subcellular location">
    <subcellularLocation>
        <location evidence="1">Cytoplasm</location>
    </subcellularLocation>
</comment>
<comment type="similarity">
    <text evidence="1">Belongs to the UvrC family.</text>
</comment>
<reference key="1">
    <citation type="journal article" date="2008" name="Genome Res.">
        <title>Insights from the complete genome sequence of Mycobacterium marinum on the evolution of Mycobacterium tuberculosis.</title>
        <authorList>
            <person name="Stinear T.P."/>
            <person name="Seemann T."/>
            <person name="Harrison P.F."/>
            <person name="Jenkin G.A."/>
            <person name="Davies J.K."/>
            <person name="Johnson P.D."/>
            <person name="Abdellah Z."/>
            <person name="Arrowsmith C."/>
            <person name="Chillingworth T."/>
            <person name="Churcher C."/>
            <person name="Clarke K."/>
            <person name="Cronin A."/>
            <person name="Davis P."/>
            <person name="Goodhead I."/>
            <person name="Holroyd N."/>
            <person name="Jagels K."/>
            <person name="Lord A."/>
            <person name="Moule S."/>
            <person name="Mungall K."/>
            <person name="Norbertczak H."/>
            <person name="Quail M.A."/>
            <person name="Rabbinowitsch E."/>
            <person name="Walker D."/>
            <person name="White B."/>
            <person name="Whitehead S."/>
            <person name="Small P.L."/>
            <person name="Brosch R."/>
            <person name="Ramakrishnan L."/>
            <person name="Fischbach M.A."/>
            <person name="Parkhill J."/>
            <person name="Cole S.T."/>
        </authorList>
    </citation>
    <scope>NUCLEOTIDE SEQUENCE [LARGE SCALE GENOMIC DNA]</scope>
    <source>
        <strain>ATCC BAA-535 / M</strain>
    </source>
</reference>
<evidence type="ECO:0000255" key="1">
    <source>
        <dbReference type="HAMAP-Rule" id="MF_00203"/>
    </source>
</evidence>